<organism>
    <name type="scientific">Aster yellows witches'-broom phytoplasma (strain AYWB)</name>
    <dbReference type="NCBI Taxonomy" id="322098"/>
    <lineage>
        <taxon>Bacteria</taxon>
        <taxon>Bacillati</taxon>
        <taxon>Mycoplasmatota</taxon>
        <taxon>Mollicutes</taxon>
        <taxon>Acholeplasmatales</taxon>
        <taxon>Acholeplasmataceae</taxon>
        <taxon>Candidatus Phytoplasma</taxon>
        <taxon>16SrI (Aster yellows group)</taxon>
    </lineage>
</organism>
<sequence length="146" mass="17172">MIIKIHNQTSFCIKPFKSLLIKMFLPIKEKKIMHLIFVTNEKIQELNSFYRQKNYPTDVLSFHNDLTFFAGLEDNSLGDVFISFPKAQEQAKTFKHSLEREIAFLAVHGFLHLKGYQHRTEEEFQIMLALQEKILQKVGLNLDKTK</sequence>
<reference key="1">
    <citation type="journal article" date="2006" name="J. Bacteriol.">
        <title>Living with genome instability: the adaptation of phytoplasmas to diverse environments of their insect and plant hosts.</title>
        <authorList>
            <person name="Bai X."/>
            <person name="Zhang J."/>
            <person name="Ewing A."/>
            <person name="Miller S.A."/>
            <person name="Jancso Radek A."/>
            <person name="Shevchenko D.V."/>
            <person name="Tsukerman K."/>
            <person name="Walunas T."/>
            <person name="Lapidus A."/>
            <person name="Campbell J.W."/>
            <person name="Hogenhout S.A."/>
        </authorList>
    </citation>
    <scope>NUCLEOTIDE SEQUENCE [LARGE SCALE GENOMIC DNA]</scope>
    <source>
        <strain>AYWB</strain>
    </source>
</reference>
<name>YBEY_AYWBP</name>
<dbReference type="EC" id="3.1.-.-" evidence="1"/>
<dbReference type="EMBL" id="CP000061">
    <property type="protein sequence ID" value="ABC65228.1"/>
    <property type="molecule type" value="Genomic_DNA"/>
</dbReference>
<dbReference type="RefSeq" id="WP_011412395.1">
    <property type="nucleotide sequence ID" value="NC_007716.1"/>
</dbReference>
<dbReference type="SMR" id="Q2NK15"/>
<dbReference type="STRING" id="322098.AYWB_111"/>
<dbReference type="KEGG" id="ayw:AYWB_111"/>
<dbReference type="eggNOG" id="COG0319">
    <property type="taxonomic scope" value="Bacteria"/>
</dbReference>
<dbReference type="HOGENOM" id="CLU_106710_3_0_14"/>
<dbReference type="OrthoDB" id="9807740at2"/>
<dbReference type="PhylomeDB" id="Q2NK15"/>
<dbReference type="Proteomes" id="UP000001934">
    <property type="component" value="Chromosome"/>
</dbReference>
<dbReference type="GO" id="GO:0005737">
    <property type="term" value="C:cytoplasm"/>
    <property type="evidence" value="ECO:0007669"/>
    <property type="project" value="UniProtKB-SubCell"/>
</dbReference>
<dbReference type="GO" id="GO:0004222">
    <property type="term" value="F:metalloendopeptidase activity"/>
    <property type="evidence" value="ECO:0007669"/>
    <property type="project" value="InterPro"/>
</dbReference>
<dbReference type="GO" id="GO:0004521">
    <property type="term" value="F:RNA endonuclease activity"/>
    <property type="evidence" value="ECO:0007669"/>
    <property type="project" value="UniProtKB-UniRule"/>
</dbReference>
<dbReference type="GO" id="GO:0008270">
    <property type="term" value="F:zinc ion binding"/>
    <property type="evidence" value="ECO:0007669"/>
    <property type="project" value="UniProtKB-UniRule"/>
</dbReference>
<dbReference type="GO" id="GO:0006364">
    <property type="term" value="P:rRNA processing"/>
    <property type="evidence" value="ECO:0007669"/>
    <property type="project" value="UniProtKB-UniRule"/>
</dbReference>
<dbReference type="Gene3D" id="3.40.390.30">
    <property type="entry name" value="Metalloproteases ('zincins'), catalytic domain"/>
    <property type="match status" value="1"/>
</dbReference>
<dbReference type="HAMAP" id="MF_00009">
    <property type="entry name" value="Endoribonucl_YbeY"/>
    <property type="match status" value="1"/>
</dbReference>
<dbReference type="InterPro" id="IPR023091">
    <property type="entry name" value="MetalPrtase_cat_dom_sf_prd"/>
</dbReference>
<dbReference type="InterPro" id="IPR002036">
    <property type="entry name" value="YbeY"/>
</dbReference>
<dbReference type="NCBIfam" id="TIGR00043">
    <property type="entry name" value="rRNA maturation RNase YbeY"/>
    <property type="match status" value="1"/>
</dbReference>
<dbReference type="PANTHER" id="PTHR46986">
    <property type="entry name" value="ENDORIBONUCLEASE YBEY, CHLOROPLASTIC"/>
    <property type="match status" value="1"/>
</dbReference>
<dbReference type="PANTHER" id="PTHR46986:SF1">
    <property type="entry name" value="ENDORIBONUCLEASE YBEY, CHLOROPLASTIC"/>
    <property type="match status" value="1"/>
</dbReference>
<dbReference type="Pfam" id="PF02130">
    <property type="entry name" value="YbeY"/>
    <property type="match status" value="1"/>
</dbReference>
<dbReference type="SUPFAM" id="SSF55486">
    <property type="entry name" value="Metalloproteases ('zincins'), catalytic domain"/>
    <property type="match status" value="1"/>
</dbReference>
<feature type="chain" id="PRO_0000284159" description="Endoribonuclease YbeY">
    <location>
        <begin position="1"/>
        <end position="146"/>
    </location>
</feature>
<feature type="binding site" evidence="1">
    <location>
        <position position="108"/>
    </location>
    <ligand>
        <name>Zn(2+)</name>
        <dbReference type="ChEBI" id="CHEBI:29105"/>
        <note>catalytic</note>
    </ligand>
</feature>
<feature type="binding site" evidence="1">
    <location>
        <position position="112"/>
    </location>
    <ligand>
        <name>Zn(2+)</name>
        <dbReference type="ChEBI" id="CHEBI:29105"/>
        <note>catalytic</note>
    </ligand>
</feature>
<feature type="binding site" evidence="1">
    <location>
        <position position="118"/>
    </location>
    <ligand>
        <name>Zn(2+)</name>
        <dbReference type="ChEBI" id="CHEBI:29105"/>
        <note>catalytic</note>
    </ligand>
</feature>
<evidence type="ECO:0000255" key="1">
    <source>
        <dbReference type="HAMAP-Rule" id="MF_00009"/>
    </source>
</evidence>
<gene>
    <name evidence="1" type="primary">ybeY</name>
    <name type="ordered locus">AYWB_111</name>
</gene>
<proteinExistence type="inferred from homology"/>
<keyword id="KW-0963">Cytoplasm</keyword>
<keyword id="KW-0255">Endonuclease</keyword>
<keyword id="KW-0378">Hydrolase</keyword>
<keyword id="KW-0479">Metal-binding</keyword>
<keyword id="KW-0540">Nuclease</keyword>
<keyword id="KW-0690">Ribosome biogenesis</keyword>
<keyword id="KW-0698">rRNA processing</keyword>
<keyword id="KW-0862">Zinc</keyword>
<comment type="function">
    <text evidence="1">Single strand-specific metallo-endoribonuclease involved in late-stage 70S ribosome quality control and in maturation of the 3' terminus of the 16S rRNA.</text>
</comment>
<comment type="cofactor">
    <cofactor evidence="1">
        <name>Zn(2+)</name>
        <dbReference type="ChEBI" id="CHEBI:29105"/>
    </cofactor>
    <text evidence="1">Binds 1 zinc ion.</text>
</comment>
<comment type="subcellular location">
    <subcellularLocation>
        <location evidence="1">Cytoplasm</location>
    </subcellularLocation>
</comment>
<comment type="similarity">
    <text evidence="1">Belongs to the endoribonuclease YbeY family.</text>
</comment>
<protein>
    <recommendedName>
        <fullName evidence="1">Endoribonuclease YbeY</fullName>
        <ecNumber evidence="1">3.1.-.-</ecNumber>
    </recommendedName>
</protein>
<accession>Q2NK15</accession>